<proteinExistence type="evidence at transcript level"/>
<feature type="chain" id="PRO_0000419313" description="Growth-regulating factor 12">
    <location>
        <begin position="1"/>
        <end position="236"/>
    </location>
</feature>
<feature type="domain" description="QLQ" evidence="2">
    <location>
        <begin position="74"/>
        <end position="109"/>
    </location>
</feature>
<feature type="domain" description="WRC" evidence="3">
    <location>
        <begin position="140"/>
        <end position="184"/>
    </location>
</feature>
<feature type="region of interest" description="Disordered" evidence="4">
    <location>
        <begin position="1"/>
        <end position="27"/>
    </location>
</feature>
<feature type="short sequence motif" description="Bipartite nuclear localization signal" evidence="3">
    <location>
        <begin position="145"/>
        <end position="155"/>
    </location>
</feature>
<feature type="short sequence motif" description="Bipartite nuclear localization signal" evidence="3">
    <location>
        <begin position="173"/>
        <end position="180"/>
    </location>
</feature>
<feature type="sequence conflict" description="In Ref. 6; AK110934." evidence="5" ref="6">
    <original>R</original>
    <variation>H</variation>
    <location>
        <position position="175"/>
    </location>
</feature>
<gene>
    <name type="primary">GRF12</name>
    <name type="ordered locus">Os04g0574500</name>
    <name type="ordered locus">LOC_Os04g48510</name>
    <name type="ORF">OsJ_15856</name>
    <name type="ORF">OSJNBa0019K04.18</name>
</gene>
<keyword id="KW-0010">Activator</keyword>
<keyword id="KW-0539">Nucleus</keyword>
<keyword id="KW-1185">Reference proteome</keyword>
<keyword id="KW-0804">Transcription</keyword>
<keyword id="KW-0805">Transcription regulation</keyword>
<comment type="function">
    <text evidence="1">Transcription activator that plays a regulatory role in gibberellin-induced stem elongation.</text>
</comment>
<comment type="subcellular location">
    <subcellularLocation>
        <location evidence="3">Nucleus</location>
    </subcellularLocation>
</comment>
<comment type="domain">
    <text>The QLQ domain and WRC domain may be involved in protein-protein interaction and DNA-binding, respectively.</text>
</comment>
<comment type="similarity">
    <text evidence="5">Belongs to the GRF family.</text>
</comment>
<comment type="sequence caution" evidence="5">
    <conflict type="erroneous translation">
        <sequence resource="EMBL-CDS" id="BAF15532"/>
    </conflict>
    <text>Wrong choice of frame.</text>
</comment>
<comment type="sequence caution" evidence="5">
    <conflict type="erroneous gene model prediction">
        <sequence resource="EMBL-CDS" id="CAD41671"/>
    </conflict>
</comment>
<reference key="1">
    <citation type="journal article" date="2002" name="Nature">
        <title>Sequence and analysis of rice chromosome 4.</title>
        <authorList>
            <person name="Feng Q."/>
            <person name="Zhang Y."/>
            <person name="Hao P."/>
            <person name="Wang S."/>
            <person name="Fu G."/>
            <person name="Huang Y."/>
            <person name="Li Y."/>
            <person name="Zhu J."/>
            <person name="Liu Y."/>
            <person name="Hu X."/>
            <person name="Jia P."/>
            <person name="Zhang Y."/>
            <person name="Zhao Q."/>
            <person name="Ying K."/>
            <person name="Yu S."/>
            <person name="Tang Y."/>
            <person name="Weng Q."/>
            <person name="Zhang L."/>
            <person name="Lu Y."/>
            <person name="Mu J."/>
            <person name="Lu Y."/>
            <person name="Zhang L.S."/>
            <person name="Yu Z."/>
            <person name="Fan D."/>
            <person name="Liu X."/>
            <person name="Lu T."/>
            <person name="Li C."/>
            <person name="Wu Y."/>
            <person name="Sun T."/>
            <person name="Lei H."/>
            <person name="Li T."/>
            <person name="Hu H."/>
            <person name="Guan J."/>
            <person name="Wu M."/>
            <person name="Zhang R."/>
            <person name="Zhou B."/>
            <person name="Chen Z."/>
            <person name="Chen L."/>
            <person name="Jin Z."/>
            <person name="Wang R."/>
            <person name="Yin H."/>
            <person name="Cai Z."/>
            <person name="Ren S."/>
            <person name="Lv G."/>
            <person name="Gu W."/>
            <person name="Zhu G."/>
            <person name="Tu Y."/>
            <person name="Jia J."/>
            <person name="Zhang Y."/>
            <person name="Chen J."/>
            <person name="Kang H."/>
            <person name="Chen X."/>
            <person name="Shao C."/>
            <person name="Sun Y."/>
            <person name="Hu Q."/>
            <person name="Zhang X."/>
            <person name="Zhang W."/>
            <person name="Wang L."/>
            <person name="Ding C."/>
            <person name="Sheng H."/>
            <person name="Gu J."/>
            <person name="Chen S."/>
            <person name="Ni L."/>
            <person name="Zhu F."/>
            <person name="Chen W."/>
            <person name="Lan L."/>
            <person name="Lai Y."/>
            <person name="Cheng Z."/>
            <person name="Gu M."/>
            <person name="Jiang J."/>
            <person name="Li J."/>
            <person name="Hong G."/>
            <person name="Xue Y."/>
            <person name="Han B."/>
        </authorList>
    </citation>
    <scope>NUCLEOTIDE SEQUENCE [LARGE SCALE GENOMIC DNA]</scope>
    <source>
        <strain>cv. Nipponbare</strain>
    </source>
</reference>
<reference key="2">
    <citation type="journal article" date="2005" name="Nature">
        <title>The map-based sequence of the rice genome.</title>
        <authorList>
            <consortium name="International rice genome sequencing project (IRGSP)"/>
        </authorList>
    </citation>
    <scope>NUCLEOTIDE SEQUENCE [LARGE SCALE GENOMIC DNA]</scope>
    <source>
        <strain>cv. Nipponbare</strain>
    </source>
</reference>
<reference key="3">
    <citation type="journal article" date="2008" name="Nucleic Acids Res.">
        <title>The rice annotation project database (RAP-DB): 2008 update.</title>
        <authorList>
            <consortium name="The rice annotation project (RAP)"/>
        </authorList>
    </citation>
    <scope>GENOME REANNOTATION</scope>
    <source>
        <strain>cv. Nipponbare</strain>
    </source>
</reference>
<reference key="4">
    <citation type="journal article" date="2013" name="Rice">
        <title>Improvement of the Oryza sativa Nipponbare reference genome using next generation sequence and optical map data.</title>
        <authorList>
            <person name="Kawahara Y."/>
            <person name="de la Bastide M."/>
            <person name="Hamilton J.P."/>
            <person name="Kanamori H."/>
            <person name="McCombie W.R."/>
            <person name="Ouyang S."/>
            <person name="Schwartz D.C."/>
            <person name="Tanaka T."/>
            <person name="Wu J."/>
            <person name="Zhou S."/>
            <person name="Childs K.L."/>
            <person name="Davidson R.M."/>
            <person name="Lin H."/>
            <person name="Quesada-Ocampo L."/>
            <person name="Vaillancourt B."/>
            <person name="Sakai H."/>
            <person name="Lee S.S."/>
            <person name="Kim J."/>
            <person name="Numa H."/>
            <person name="Itoh T."/>
            <person name="Buell C.R."/>
            <person name="Matsumoto T."/>
        </authorList>
    </citation>
    <scope>GENOME REANNOTATION</scope>
    <source>
        <strain>cv. Nipponbare</strain>
    </source>
</reference>
<reference key="5">
    <citation type="journal article" date="2005" name="PLoS Biol.">
        <title>The genomes of Oryza sativa: a history of duplications.</title>
        <authorList>
            <person name="Yu J."/>
            <person name="Wang J."/>
            <person name="Lin W."/>
            <person name="Li S."/>
            <person name="Li H."/>
            <person name="Zhou J."/>
            <person name="Ni P."/>
            <person name="Dong W."/>
            <person name="Hu S."/>
            <person name="Zeng C."/>
            <person name="Zhang J."/>
            <person name="Zhang Y."/>
            <person name="Li R."/>
            <person name="Xu Z."/>
            <person name="Li S."/>
            <person name="Li X."/>
            <person name="Zheng H."/>
            <person name="Cong L."/>
            <person name="Lin L."/>
            <person name="Yin J."/>
            <person name="Geng J."/>
            <person name="Li G."/>
            <person name="Shi J."/>
            <person name="Liu J."/>
            <person name="Lv H."/>
            <person name="Li J."/>
            <person name="Wang J."/>
            <person name="Deng Y."/>
            <person name="Ran L."/>
            <person name="Shi X."/>
            <person name="Wang X."/>
            <person name="Wu Q."/>
            <person name="Li C."/>
            <person name="Ren X."/>
            <person name="Wang J."/>
            <person name="Wang X."/>
            <person name="Li D."/>
            <person name="Liu D."/>
            <person name="Zhang X."/>
            <person name="Ji Z."/>
            <person name="Zhao W."/>
            <person name="Sun Y."/>
            <person name="Zhang Z."/>
            <person name="Bao J."/>
            <person name="Han Y."/>
            <person name="Dong L."/>
            <person name="Ji J."/>
            <person name="Chen P."/>
            <person name="Wu S."/>
            <person name="Liu J."/>
            <person name="Xiao Y."/>
            <person name="Bu D."/>
            <person name="Tan J."/>
            <person name="Yang L."/>
            <person name="Ye C."/>
            <person name="Zhang J."/>
            <person name="Xu J."/>
            <person name="Zhou Y."/>
            <person name="Yu Y."/>
            <person name="Zhang B."/>
            <person name="Zhuang S."/>
            <person name="Wei H."/>
            <person name="Liu B."/>
            <person name="Lei M."/>
            <person name="Yu H."/>
            <person name="Li Y."/>
            <person name="Xu H."/>
            <person name="Wei S."/>
            <person name="He X."/>
            <person name="Fang L."/>
            <person name="Zhang Z."/>
            <person name="Zhang Y."/>
            <person name="Huang X."/>
            <person name="Su Z."/>
            <person name="Tong W."/>
            <person name="Li J."/>
            <person name="Tong Z."/>
            <person name="Li S."/>
            <person name="Ye J."/>
            <person name="Wang L."/>
            <person name="Fang L."/>
            <person name="Lei T."/>
            <person name="Chen C.-S."/>
            <person name="Chen H.-C."/>
            <person name="Xu Z."/>
            <person name="Li H."/>
            <person name="Huang H."/>
            <person name="Zhang F."/>
            <person name="Xu H."/>
            <person name="Li N."/>
            <person name="Zhao C."/>
            <person name="Li S."/>
            <person name="Dong L."/>
            <person name="Huang Y."/>
            <person name="Li L."/>
            <person name="Xi Y."/>
            <person name="Qi Q."/>
            <person name="Li W."/>
            <person name="Zhang B."/>
            <person name="Hu W."/>
            <person name="Zhang Y."/>
            <person name="Tian X."/>
            <person name="Jiao Y."/>
            <person name="Liang X."/>
            <person name="Jin J."/>
            <person name="Gao L."/>
            <person name="Zheng W."/>
            <person name="Hao B."/>
            <person name="Liu S.-M."/>
            <person name="Wang W."/>
            <person name="Yuan L."/>
            <person name="Cao M."/>
            <person name="McDermott J."/>
            <person name="Samudrala R."/>
            <person name="Wang J."/>
            <person name="Wong G.K.-S."/>
            <person name="Yang H."/>
        </authorList>
    </citation>
    <scope>NUCLEOTIDE SEQUENCE [LARGE SCALE GENOMIC DNA]</scope>
    <source>
        <strain>cv. Nipponbare</strain>
    </source>
</reference>
<reference key="6">
    <citation type="journal article" date="2003" name="Science">
        <title>Collection, mapping, and annotation of over 28,000 cDNA clones from japonica rice.</title>
        <authorList>
            <consortium name="The rice full-length cDNA consortium"/>
        </authorList>
    </citation>
    <scope>NUCLEOTIDE SEQUENCE [LARGE SCALE MRNA]</scope>
    <source>
        <strain>cv. Nipponbare</strain>
    </source>
</reference>
<reference key="7">
    <citation type="journal article" date="2004" name="Plant Cell Physiol.">
        <title>Whole genome analysis of the OsGRF gene family encoding plant-specific putative transcription activators in rice (Oryza sativa L.).</title>
        <authorList>
            <person name="Choi D."/>
            <person name="Kim J.H."/>
            <person name="Kende H."/>
        </authorList>
    </citation>
    <scope>IDENTIFICATION</scope>
    <scope>GENE FAMILY</scope>
    <source>
        <strain>cv. Nipponbare</strain>
    </source>
</reference>
<accession>Q6AWX7</accession>
<accession>A0A0P0WDW7</accession>
<accession>Q0JAV5</accession>
<accession>Q7XTX9</accession>
<dbReference type="EMBL" id="AL606640">
    <property type="protein sequence ID" value="CAD41671.3"/>
    <property type="status" value="ALT_SEQ"/>
    <property type="molecule type" value="Genomic_DNA"/>
</dbReference>
<dbReference type="EMBL" id="AP008210">
    <property type="protein sequence ID" value="BAF15532.1"/>
    <property type="status" value="ALT_SEQ"/>
    <property type="molecule type" value="Genomic_DNA"/>
</dbReference>
<dbReference type="EMBL" id="AP014960">
    <property type="protein sequence ID" value="BAS90599.1"/>
    <property type="molecule type" value="Genomic_DNA"/>
</dbReference>
<dbReference type="EMBL" id="CM000141">
    <property type="protein sequence ID" value="EEE61538.1"/>
    <property type="molecule type" value="Genomic_DNA"/>
</dbReference>
<dbReference type="EMBL" id="AK110934">
    <property type="status" value="NOT_ANNOTATED_CDS"/>
    <property type="molecule type" value="mRNA"/>
</dbReference>
<dbReference type="EMBL" id="BK004881">
    <property type="protein sequence ID" value="DAA04956.1"/>
    <property type="molecule type" value="Genomic_DNA"/>
</dbReference>
<dbReference type="RefSeq" id="XP_015635359.1">
    <property type="nucleotide sequence ID" value="XM_015779873.1"/>
</dbReference>
<dbReference type="FunCoup" id="Q6AWX7">
    <property type="interactions" value="1"/>
</dbReference>
<dbReference type="STRING" id="39947.Q6AWX7"/>
<dbReference type="PaxDb" id="39947-Q6AWX7"/>
<dbReference type="EnsemblPlants" id="Os04t0574500-01">
    <property type="protein sequence ID" value="Os04t0574500-01"/>
    <property type="gene ID" value="Os04g0574500"/>
</dbReference>
<dbReference type="Gramene" id="Os04t0574500-01">
    <property type="protein sequence ID" value="Os04t0574500-01"/>
    <property type="gene ID" value="Os04g0574500"/>
</dbReference>
<dbReference type="KEGG" id="dosa:Os04g0574500"/>
<dbReference type="eggNOG" id="ENOG502RZPC">
    <property type="taxonomic scope" value="Eukaryota"/>
</dbReference>
<dbReference type="HOGENOM" id="CLU_084616_1_0_1"/>
<dbReference type="InParanoid" id="Q6AWX7"/>
<dbReference type="OMA" id="HTEVEDH"/>
<dbReference type="OrthoDB" id="1927209at2759"/>
<dbReference type="Proteomes" id="UP000000763">
    <property type="component" value="Chromosome 4"/>
</dbReference>
<dbReference type="Proteomes" id="UP000007752">
    <property type="component" value="Chromosome 4"/>
</dbReference>
<dbReference type="Proteomes" id="UP000059680">
    <property type="component" value="Chromosome 4"/>
</dbReference>
<dbReference type="GO" id="GO:0005634">
    <property type="term" value="C:nucleus"/>
    <property type="evidence" value="ECO:0007669"/>
    <property type="project" value="UniProtKB-SubCell"/>
</dbReference>
<dbReference type="GO" id="GO:0005524">
    <property type="term" value="F:ATP binding"/>
    <property type="evidence" value="ECO:0007669"/>
    <property type="project" value="InterPro"/>
</dbReference>
<dbReference type="GO" id="GO:0032502">
    <property type="term" value="P:developmental process"/>
    <property type="evidence" value="ECO:0007669"/>
    <property type="project" value="InterPro"/>
</dbReference>
<dbReference type="GO" id="GO:0006351">
    <property type="term" value="P:DNA-templated transcription"/>
    <property type="evidence" value="ECO:0007669"/>
    <property type="project" value="InterPro"/>
</dbReference>
<dbReference type="GO" id="GO:0006355">
    <property type="term" value="P:regulation of DNA-templated transcription"/>
    <property type="evidence" value="ECO:0007669"/>
    <property type="project" value="InterPro"/>
</dbReference>
<dbReference type="InterPro" id="IPR014978">
    <property type="entry name" value="Gln-Leu-Gln_QLQ"/>
</dbReference>
<dbReference type="InterPro" id="IPR031137">
    <property type="entry name" value="GRF"/>
</dbReference>
<dbReference type="InterPro" id="IPR014977">
    <property type="entry name" value="WRC_dom"/>
</dbReference>
<dbReference type="PANTHER" id="PTHR31602">
    <property type="entry name" value="GROWTH-REGULATING FACTOR 5"/>
    <property type="match status" value="1"/>
</dbReference>
<dbReference type="PANTHER" id="PTHR31602:SF81">
    <property type="entry name" value="GROWTH-REGULATING FACTOR 9"/>
    <property type="match status" value="1"/>
</dbReference>
<dbReference type="Pfam" id="PF08880">
    <property type="entry name" value="QLQ"/>
    <property type="match status" value="1"/>
</dbReference>
<dbReference type="Pfam" id="PF08879">
    <property type="entry name" value="WRC"/>
    <property type="match status" value="1"/>
</dbReference>
<dbReference type="SMART" id="SM00951">
    <property type="entry name" value="QLQ"/>
    <property type="match status" value="1"/>
</dbReference>
<dbReference type="PROSITE" id="PS51666">
    <property type="entry name" value="QLQ"/>
    <property type="match status" value="1"/>
</dbReference>
<dbReference type="PROSITE" id="PS51667">
    <property type="entry name" value="WRC"/>
    <property type="match status" value="1"/>
</dbReference>
<evidence type="ECO:0000250" key="1"/>
<evidence type="ECO:0000255" key="2">
    <source>
        <dbReference type="PROSITE-ProRule" id="PRU01001"/>
    </source>
</evidence>
<evidence type="ECO:0000255" key="3">
    <source>
        <dbReference type="PROSITE-ProRule" id="PRU01002"/>
    </source>
</evidence>
<evidence type="ECO:0000256" key="4">
    <source>
        <dbReference type="SAM" id="MobiDB-lite"/>
    </source>
</evidence>
<evidence type="ECO:0000305" key="5"/>
<name>GRF12_ORYSJ</name>
<organism>
    <name type="scientific">Oryza sativa subsp. japonica</name>
    <name type="common">Rice</name>
    <dbReference type="NCBI Taxonomy" id="39947"/>
    <lineage>
        <taxon>Eukaryota</taxon>
        <taxon>Viridiplantae</taxon>
        <taxon>Streptophyta</taxon>
        <taxon>Embryophyta</taxon>
        <taxon>Tracheophyta</taxon>
        <taxon>Spermatophyta</taxon>
        <taxon>Magnoliopsida</taxon>
        <taxon>Liliopsida</taxon>
        <taxon>Poales</taxon>
        <taxon>Poaceae</taxon>
        <taxon>BOP clade</taxon>
        <taxon>Oryzoideae</taxon>
        <taxon>Oryzeae</taxon>
        <taxon>Oryzinae</taxon>
        <taxon>Oryza</taxon>
        <taxon>Oryza sativa</taxon>
    </lineage>
</organism>
<protein>
    <recommendedName>
        <fullName>Growth-regulating factor 12</fullName>
        <shortName>OsGRF12</shortName>
    </recommendedName>
    <alternativeName>
        <fullName>Transcription activator GRF12</fullName>
    </alternativeName>
</protein>
<sequence length="236" mass="24971">MLAEGRQVYLPPPPPSKLPRLSGTDPTDGVVTMAAPSPLVLGLGLGLGGSGSDSSGSDAEASAATVREARPPSALTFMQRQELEQQVLIYRYFAAGAPVPVHLVLPIWKSIAAASSFGPQSFPSLTGLGSLCFDYRSSMEPEPGRCRRTDGKKWRCSRDVVPGHKYCERHVHRGRGRSRKPMEASAAVAPTYLPVRPALHTVATLATSAPSLSHLGFSSASKVLLAHTTTGTTRAT</sequence>